<proteinExistence type="inferred from homology"/>
<evidence type="ECO:0000255" key="1">
    <source>
        <dbReference type="HAMAP-Rule" id="MF_01642"/>
    </source>
</evidence>
<feature type="chain" id="PRO_0000342210" description="LL-diaminopimelate aminotransferase 2">
    <location>
        <begin position="1"/>
        <end position="390"/>
    </location>
</feature>
<feature type="binding site" evidence="1">
    <location>
        <position position="13"/>
    </location>
    <ligand>
        <name>substrate</name>
    </ligand>
</feature>
<feature type="binding site" evidence="1">
    <location>
        <position position="38"/>
    </location>
    <ligand>
        <name>substrate</name>
    </ligand>
</feature>
<feature type="binding site" evidence="1">
    <location>
        <position position="67"/>
    </location>
    <ligand>
        <name>pyridoxal 5'-phosphate</name>
        <dbReference type="ChEBI" id="CHEBI:597326"/>
    </ligand>
</feature>
<feature type="binding site" evidence="1">
    <location>
        <begin position="102"/>
        <end position="103"/>
    </location>
    <ligand>
        <name>pyridoxal 5'-phosphate</name>
        <dbReference type="ChEBI" id="CHEBI:597326"/>
    </ligand>
</feature>
<feature type="binding site" evidence="1">
    <location>
        <position position="103"/>
    </location>
    <ligand>
        <name>substrate</name>
    </ligand>
</feature>
<feature type="binding site" evidence="1">
    <location>
        <position position="127"/>
    </location>
    <ligand>
        <name>pyridoxal 5'-phosphate</name>
        <dbReference type="ChEBI" id="CHEBI:597326"/>
    </ligand>
</feature>
<feature type="binding site" evidence="1">
    <location>
        <position position="127"/>
    </location>
    <ligand>
        <name>substrate</name>
    </ligand>
</feature>
<feature type="binding site" evidence="1">
    <location>
        <position position="177"/>
    </location>
    <ligand>
        <name>pyridoxal 5'-phosphate</name>
        <dbReference type="ChEBI" id="CHEBI:597326"/>
    </ligand>
</feature>
<feature type="binding site" evidence="1">
    <location>
        <position position="177"/>
    </location>
    <ligand>
        <name>substrate</name>
    </ligand>
</feature>
<feature type="binding site" evidence="1">
    <location>
        <position position="208"/>
    </location>
    <ligand>
        <name>pyridoxal 5'-phosphate</name>
        <dbReference type="ChEBI" id="CHEBI:597326"/>
    </ligand>
</feature>
<feature type="binding site" evidence="1">
    <location>
        <begin position="236"/>
        <end position="238"/>
    </location>
    <ligand>
        <name>pyridoxal 5'-phosphate</name>
        <dbReference type="ChEBI" id="CHEBI:597326"/>
    </ligand>
</feature>
<feature type="binding site" evidence="1">
    <location>
        <position position="247"/>
    </location>
    <ligand>
        <name>pyridoxal 5'-phosphate</name>
        <dbReference type="ChEBI" id="CHEBI:597326"/>
    </ligand>
</feature>
<feature type="binding site" evidence="1">
    <location>
        <position position="365"/>
    </location>
    <ligand>
        <name>substrate</name>
    </ligand>
</feature>
<feature type="modified residue" description="N6-(pyridoxal phosphate)lysine" evidence="1">
    <location>
        <position position="239"/>
    </location>
</feature>
<organism>
    <name type="scientific">Nostoc sp. (strain PCC 7120 / SAG 25.82 / UTEX 2576)</name>
    <dbReference type="NCBI Taxonomy" id="103690"/>
    <lineage>
        <taxon>Bacteria</taxon>
        <taxon>Bacillati</taxon>
        <taxon>Cyanobacteriota</taxon>
        <taxon>Cyanophyceae</taxon>
        <taxon>Nostocales</taxon>
        <taxon>Nostocaceae</taxon>
        <taxon>Nostoc</taxon>
    </lineage>
</organism>
<comment type="function">
    <text evidence="1">Involved in the synthesis of meso-diaminopimelate (m-DAP or DL-DAP), required for both lysine and peptidoglycan biosynthesis. Catalyzes the direct conversion of tetrahydrodipicolinate to LL-diaminopimelate.</text>
</comment>
<comment type="catalytic activity">
    <reaction evidence="1">
        <text>(2S,6S)-2,6-diaminopimelate + 2-oxoglutarate = (S)-2,3,4,5-tetrahydrodipicolinate + L-glutamate + H2O + H(+)</text>
        <dbReference type="Rhea" id="RHEA:23988"/>
        <dbReference type="ChEBI" id="CHEBI:15377"/>
        <dbReference type="ChEBI" id="CHEBI:15378"/>
        <dbReference type="ChEBI" id="CHEBI:16810"/>
        <dbReference type="ChEBI" id="CHEBI:16845"/>
        <dbReference type="ChEBI" id="CHEBI:29985"/>
        <dbReference type="ChEBI" id="CHEBI:57609"/>
        <dbReference type="EC" id="2.6.1.83"/>
    </reaction>
</comment>
<comment type="cofactor">
    <cofactor evidence="1">
        <name>pyridoxal 5'-phosphate</name>
        <dbReference type="ChEBI" id="CHEBI:597326"/>
    </cofactor>
</comment>
<comment type="pathway">
    <text evidence="1">Amino-acid biosynthesis; L-lysine biosynthesis via DAP pathway; LL-2,6-diaminopimelate from (S)-tetrahydrodipicolinate (aminotransferase route): step 1/1.</text>
</comment>
<comment type="subunit">
    <text evidence="1">Homodimer.</text>
</comment>
<comment type="similarity">
    <text evidence="1">Belongs to the class-I pyridoxal-phosphate-dependent aminotransferase family. LL-diaminopimelate aminotransferase subfamily.</text>
</comment>
<gene>
    <name evidence="1" type="primary">dapL2</name>
    <name type="ordered locus">all4327</name>
</gene>
<reference key="1">
    <citation type="journal article" date="2001" name="DNA Res.">
        <title>Complete genomic sequence of the filamentous nitrogen-fixing cyanobacterium Anabaena sp. strain PCC 7120.</title>
        <authorList>
            <person name="Kaneko T."/>
            <person name="Nakamura Y."/>
            <person name="Wolk C.P."/>
            <person name="Kuritz T."/>
            <person name="Sasamoto S."/>
            <person name="Watanabe A."/>
            <person name="Iriguchi M."/>
            <person name="Ishikawa A."/>
            <person name="Kawashima K."/>
            <person name="Kimura T."/>
            <person name="Kishida Y."/>
            <person name="Kohara M."/>
            <person name="Matsumoto M."/>
            <person name="Matsuno A."/>
            <person name="Muraki A."/>
            <person name="Nakazaki N."/>
            <person name="Shimpo S."/>
            <person name="Sugimoto M."/>
            <person name="Takazawa M."/>
            <person name="Yamada M."/>
            <person name="Yasuda M."/>
            <person name="Tabata S."/>
        </authorList>
    </citation>
    <scope>NUCLEOTIDE SEQUENCE [LARGE SCALE GENOMIC DNA]</scope>
    <source>
        <strain>PCC 7120 / SAG 25.82 / UTEX 2576</strain>
    </source>
</reference>
<sequence>MQFAKRLEKIPPYLFAEINRKREALIAKGVDIINIGVGDPDKPTPAHILQAMREAIDDASNHNYPPYEGTQEFREAAVEWMERRFGVMDLNPNTEVVSSIGSKEAIHNTFLAFVEAGDYTLIPDPGYPVYRTSTIFAGGEAFSMPLKAENKFLPDLDLIPEEVARKAKMLWINYPNNPTGALATLEFFEELVALCQQYSILLCHDHAYSEMAYDGYKPPSVLQIPGAKDIAIEFHSLSKSYNMTGWRIGFAVGNAYAIKGLSQVKTNVDSGVFKAIQKAAIAAYATDEVELQAVMSVYQSRRDIIVKGLQSLGWPIEPPKATLYVWVPVPPGYTSTEFTTLLLDKCGIVVPPGVGYGASGEGYFRVALTISDERLHEAIQRMQDAGIRYA</sequence>
<accession>Q8YP73</accession>
<protein>
    <recommendedName>
        <fullName evidence="1">LL-diaminopimelate aminotransferase 2</fullName>
        <shortName evidence="1">DAP-AT 2</shortName>
        <shortName evidence="1">DAP-aminotransferase 2</shortName>
        <shortName evidence="1">LL-DAP-aminotransferase 2</shortName>
        <ecNumber evidence="1">2.6.1.83</ecNumber>
    </recommendedName>
</protein>
<name>DAPT2_NOSS1</name>
<dbReference type="EC" id="2.6.1.83" evidence="1"/>
<dbReference type="EMBL" id="BA000019">
    <property type="protein sequence ID" value="BAB76026.1"/>
    <property type="molecule type" value="Genomic_DNA"/>
</dbReference>
<dbReference type="PIR" id="AH2346">
    <property type="entry name" value="AH2346"/>
</dbReference>
<dbReference type="RefSeq" id="WP_010998465.1">
    <property type="nucleotide sequence ID" value="NZ_RSCN01000027.1"/>
</dbReference>
<dbReference type="SMR" id="Q8YP73"/>
<dbReference type="STRING" id="103690.gene:10496376"/>
<dbReference type="KEGG" id="ana:all4327"/>
<dbReference type="eggNOG" id="COG0436">
    <property type="taxonomic scope" value="Bacteria"/>
</dbReference>
<dbReference type="OrthoDB" id="9802328at2"/>
<dbReference type="UniPathway" id="UPA00034">
    <property type="reaction ID" value="UER00466"/>
</dbReference>
<dbReference type="Proteomes" id="UP000002483">
    <property type="component" value="Chromosome"/>
</dbReference>
<dbReference type="GO" id="GO:0010285">
    <property type="term" value="F:L,L-diaminopimelate aminotransferase activity"/>
    <property type="evidence" value="ECO:0007669"/>
    <property type="project" value="UniProtKB-UniRule"/>
</dbReference>
<dbReference type="GO" id="GO:0030170">
    <property type="term" value="F:pyridoxal phosphate binding"/>
    <property type="evidence" value="ECO:0007669"/>
    <property type="project" value="UniProtKB-UniRule"/>
</dbReference>
<dbReference type="GO" id="GO:0033362">
    <property type="term" value="P:lysine biosynthetic process via diaminopimelate, diaminopimelate-aminotransferase pathway"/>
    <property type="evidence" value="ECO:0007669"/>
    <property type="project" value="UniProtKB-UniRule"/>
</dbReference>
<dbReference type="CDD" id="cd00609">
    <property type="entry name" value="AAT_like"/>
    <property type="match status" value="1"/>
</dbReference>
<dbReference type="Gene3D" id="3.90.1150.10">
    <property type="entry name" value="Aspartate Aminotransferase, domain 1"/>
    <property type="match status" value="1"/>
</dbReference>
<dbReference type="Gene3D" id="3.40.640.10">
    <property type="entry name" value="Type I PLP-dependent aspartate aminotransferase-like (Major domain)"/>
    <property type="match status" value="1"/>
</dbReference>
<dbReference type="HAMAP" id="MF_01642">
    <property type="entry name" value="DapL_aminotrans_1"/>
    <property type="match status" value="1"/>
</dbReference>
<dbReference type="InterPro" id="IPR004839">
    <property type="entry name" value="Aminotransferase_I/II_large"/>
</dbReference>
<dbReference type="InterPro" id="IPR019942">
    <property type="entry name" value="DapL/ALD1"/>
</dbReference>
<dbReference type="InterPro" id="IPR050881">
    <property type="entry name" value="LL-DAP_aminotransferase"/>
</dbReference>
<dbReference type="InterPro" id="IPR004838">
    <property type="entry name" value="NHTrfase_class1_PyrdxlP-BS"/>
</dbReference>
<dbReference type="InterPro" id="IPR015424">
    <property type="entry name" value="PyrdxlP-dep_Trfase"/>
</dbReference>
<dbReference type="InterPro" id="IPR015421">
    <property type="entry name" value="PyrdxlP-dep_Trfase_major"/>
</dbReference>
<dbReference type="InterPro" id="IPR015422">
    <property type="entry name" value="PyrdxlP-dep_Trfase_small"/>
</dbReference>
<dbReference type="NCBIfam" id="NF006756">
    <property type="entry name" value="PRK09276.1"/>
    <property type="match status" value="1"/>
</dbReference>
<dbReference type="PANTHER" id="PTHR42832">
    <property type="entry name" value="AMINO ACID AMINOTRANSFERASE"/>
    <property type="match status" value="1"/>
</dbReference>
<dbReference type="PANTHER" id="PTHR42832:SF3">
    <property type="entry name" value="L-GLUTAMINE--4-(METHYLSULFANYL)-2-OXOBUTANOATE AMINOTRANSFERASE"/>
    <property type="match status" value="1"/>
</dbReference>
<dbReference type="Pfam" id="PF00155">
    <property type="entry name" value="Aminotran_1_2"/>
    <property type="match status" value="1"/>
</dbReference>
<dbReference type="SUPFAM" id="SSF53383">
    <property type="entry name" value="PLP-dependent transferases"/>
    <property type="match status" value="1"/>
</dbReference>
<dbReference type="PROSITE" id="PS00105">
    <property type="entry name" value="AA_TRANSFER_CLASS_1"/>
    <property type="match status" value="1"/>
</dbReference>
<keyword id="KW-0032">Aminotransferase</keyword>
<keyword id="KW-0663">Pyridoxal phosphate</keyword>
<keyword id="KW-1185">Reference proteome</keyword>
<keyword id="KW-0808">Transferase</keyword>